<keyword id="KW-0072">Autophagy</keyword>
<keyword id="KW-0256">Endoplasmic reticulum</keyword>
<keyword id="KW-0931">ER-Golgi transport</keyword>
<keyword id="KW-0472">Membrane</keyword>
<keyword id="KW-0653">Protein transport</keyword>
<keyword id="KW-1185">Reference proteome</keyword>
<keyword id="KW-0813">Transport</keyword>
<evidence type="ECO:0000250" key="1"/>
<evidence type="ECO:0000256" key="2">
    <source>
        <dbReference type="SAM" id="MobiDB-lite"/>
    </source>
</evidence>
<evidence type="ECO:0000305" key="3"/>
<name>SEC16_YARLI</name>
<accession>Q6CEV2</accession>
<comment type="function">
    <text evidence="1">Involved in the initiation of assembly of the COPII coat required for the formation of transport vesicles from the endoplasmic reticulum (ER) and the selection of cargo molecules. Also involved in autophagy (By similarity).</text>
</comment>
<comment type="subcellular location">
    <subcellularLocation>
        <location evidence="1">Endoplasmic reticulum membrane</location>
        <topology evidence="1">Peripheral membrane protein</topology>
        <orientation evidence="1">Cytoplasmic side</orientation>
    </subcellularLocation>
</comment>
<comment type="similarity">
    <text evidence="3">Belongs to the SEC16 family.</text>
</comment>
<protein>
    <recommendedName>
        <fullName>COPII coat assembly protein SEC16</fullName>
    </recommendedName>
    <alternativeName>
        <fullName>Protein transport protein SEC16</fullName>
    </alternativeName>
</protein>
<feature type="chain" id="PRO_0000295544" description="COPII coat assembly protein SEC16">
    <location>
        <begin position="1"/>
        <end position="2183"/>
    </location>
</feature>
<feature type="region of interest" description="Disordered" evidence="2">
    <location>
        <begin position="60"/>
        <end position="83"/>
    </location>
</feature>
<feature type="region of interest" description="Disordered" evidence="2">
    <location>
        <begin position="102"/>
        <end position="198"/>
    </location>
</feature>
<feature type="region of interest" description="Disordered" evidence="2">
    <location>
        <begin position="247"/>
        <end position="278"/>
    </location>
</feature>
<feature type="region of interest" description="Disordered" evidence="2">
    <location>
        <begin position="358"/>
        <end position="608"/>
    </location>
</feature>
<feature type="region of interest" description="Disordered" evidence="2">
    <location>
        <begin position="717"/>
        <end position="1071"/>
    </location>
</feature>
<feature type="region of interest" description="Disordered" evidence="2">
    <location>
        <begin position="1541"/>
        <end position="1596"/>
    </location>
</feature>
<feature type="region of interest" description="Disordered" evidence="2">
    <location>
        <begin position="1693"/>
        <end position="2044"/>
    </location>
</feature>
<feature type="region of interest" description="Disordered" evidence="2">
    <location>
        <begin position="2066"/>
        <end position="2183"/>
    </location>
</feature>
<feature type="compositionally biased region" description="Basic residues" evidence="2">
    <location>
        <begin position="64"/>
        <end position="75"/>
    </location>
</feature>
<feature type="compositionally biased region" description="Low complexity" evidence="2">
    <location>
        <begin position="102"/>
        <end position="134"/>
    </location>
</feature>
<feature type="compositionally biased region" description="Acidic residues" evidence="2">
    <location>
        <begin position="149"/>
        <end position="175"/>
    </location>
</feature>
<feature type="compositionally biased region" description="Low complexity" evidence="2">
    <location>
        <begin position="259"/>
        <end position="278"/>
    </location>
</feature>
<feature type="compositionally biased region" description="Basic and acidic residues" evidence="2">
    <location>
        <begin position="358"/>
        <end position="369"/>
    </location>
</feature>
<feature type="compositionally biased region" description="Basic and acidic residues" evidence="2">
    <location>
        <begin position="387"/>
        <end position="405"/>
    </location>
</feature>
<feature type="compositionally biased region" description="Basic and acidic residues" evidence="2">
    <location>
        <begin position="429"/>
        <end position="451"/>
    </location>
</feature>
<feature type="compositionally biased region" description="Polar residues" evidence="2">
    <location>
        <begin position="717"/>
        <end position="732"/>
    </location>
</feature>
<feature type="compositionally biased region" description="Basic and acidic residues" evidence="2">
    <location>
        <begin position="740"/>
        <end position="749"/>
    </location>
</feature>
<feature type="compositionally biased region" description="Low complexity" evidence="2">
    <location>
        <begin position="781"/>
        <end position="791"/>
    </location>
</feature>
<feature type="compositionally biased region" description="Pro residues" evidence="2">
    <location>
        <begin position="792"/>
        <end position="807"/>
    </location>
</feature>
<feature type="compositionally biased region" description="Pro residues" evidence="2">
    <location>
        <begin position="815"/>
        <end position="824"/>
    </location>
</feature>
<feature type="compositionally biased region" description="Pro residues" evidence="2">
    <location>
        <begin position="906"/>
        <end position="916"/>
    </location>
</feature>
<feature type="compositionally biased region" description="Low complexity" evidence="2">
    <location>
        <begin position="990"/>
        <end position="1008"/>
    </location>
</feature>
<feature type="compositionally biased region" description="Low complexity" evidence="2">
    <location>
        <begin position="1016"/>
        <end position="1043"/>
    </location>
</feature>
<feature type="compositionally biased region" description="Low complexity" evidence="2">
    <location>
        <begin position="1697"/>
        <end position="1714"/>
    </location>
</feature>
<feature type="compositionally biased region" description="Acidic residues" evidence="2">
    <location>
        <begin position="1733"/>
        <end position="1746"/>
    </location>
</feature>
<feature type="compositionally biased region" description="Basic and acidic residues" evidence="2">
    <location>
        <begin position="1751"/>
        <end position="1766"/>
    </location>
</feature>
<feature type="compositionally biased region" description="Pro residues" evidence="2">
    <location>
        <begin position="1769"/>
        <end position="1785"/>
    </location>
</feature>
<feature type="compositionally biased region" description="Low complexity" evidence="2">
    <location>
        <begin position="1786"/>
        <end position="1804"/>
    </location>
</feature>
<feature type="compositionally biased region" description="Low complexity" evidence="2">
    <location>
        <begin position="1831"/>
        <end position="1846"/>
    </location>
</feature>
<feature type="compositionally biased region" description="Acidic residues" evidence="2">
    <location>
        <begin position="1890"/>
        <end position="1902"/>
    </location>
</feature>
<feature type="compositionally biased region" description="Acidic residues" evidence="2">
    <location>
        <begin position="1934"/>
        <end position="1943"/>
    </location>
</feature>
<feature type="compositionally biased region" description="Pro residues" evidence="2">
    <location>
        <begin position="1957"/>
        <end position="1966"/>
    </location>
</feature>
<feature type="compositionally biased region" description="Low complexity" evidence="2">
    <location>
        <begin position="1969"/>
        <end position="1986"/>
    </location>
</feature>
<feature type="compositionally biased region" description="Basic and acidic residues" evidence="2">
    <location>
        <begin position="2004"/>
        <end position="2022"/>
    </location>
</feature>
<feature type="compositionally biased region" description="Basic and acidic residues" evidence="2">
    <location>
        <begin position="2031"/>
        <end position="2044"/>
    </location>
</feature>
<feature type="compositionally biased region" description="Pro residues" evidence="2">
    <location>
        <begin position="2079"/>
        <end position="2104"/>
    </location>
</feature>
<feature type="compositionally biased region" description="Low complexity" evidence="2">
    <location>
        <begin position="2105"/>
        <end position="2117"/>
    </location>
</feature>
<feature type="compositionally biased region" description="Pro residues" evidence="2">
    <location>
        <begin position="2118"/>
        <end position="2130"/>
    </location>
</feature>
<feature type="compositionally biased region" description="Low complexity" evidence="2">
    <location>
        <begin position="2135"/>
        <end position="2146"/>
    </location>
</feature>
<gene>
    <name type="primary">SEC16</name>
    <name type="ordered locus">YALI0B12694g</name>
</gene>
<organism>
    <name type="scientific">Yarrowia lipolytica (strain CLIB 122 / E 150)</name>
    <name type="common">Yeast</name>
    <name type="synonym">Candida lipolytica</name>
    <dbReference type="NCBI Taxonomy" id="284591"/>
    <lineage>
        <taxon>Eukaryota</taxon>
        <taxon>Fungi</taxon>
        <taxon>Dikarya</taxon>
        <taxon>Ascomycota</taxon>
        <taxon>Saccharomycotina</taxon>
        <taxon>Dipodascomycetes</taxon>
        <taxon>Dipodascales</taxon>
        <taxon>Dipodascales incertae sedis</taxon>
        <taxon>Yarrowia</taxon>
    </lineage>
</organism>
<sequence>MRRMFLVSRNGYKRWPEKQKLQTFRVLISTYIFSQPPILAQYHTIPCSNLKLYCRRPRSTMAKKNNKKSKAKAKKAAPSVAVPATNVASSVAADPAAVETASSTSASLSVPESAAATETTASTSPTSPVTNVSPLAEAIAGDEGSGSIPDDEEDIDEEEETGTEESAEAEAEPESPEGTTPVLTVQPNALAAEPTVETVDVVVPVPVEPEEDEQESEVKAEIDPVVAEIEQPEPPMASDKDFFSTLSKEEDGEEDVKEVATSTTTDVATPVATATPSITQVEKHLESRFMGNPVVENEKKHKEDEIREVEDQLTERLMRDPVVEGIKRERAEESAQVEEKLEKRFMEDPVVEQIKQEQADEYRKVRDQLETGSEEPNDDFFANLGSEEAKLQAKDTEPDTKHEDDFFSTLGGSSDETGKKTVAETQSEPETKTIETAKAEEAKPIETKTEPVAEDDFFSGLGKSEQEQGFVPEHTTAASTTTKEEDDFMASLAQPQNPEQTDPLPQDDFFSQLAEENVQSVSAEPEHKSPVAAPAATKAAAAEDDFFSQLGKSPEKSVPAAATSDDAPRRRHKVQPSGADFFDQLGVSETEAPPALHEPPQPKPITLSLDEDDDLLLTDEDDQAEVLAEAGKPNPPVQSFAFLEDDDLLESDQDFLETDDEDEEPMAAQTGGDFRANQQHQNTYFPSVPVAPVSTSRYSTPTVPSVSQFGGYGAAQSTPNMYQPVSSQSTPSAAAPGAGKRVDKNKSDAFDFPTGMIPKVVKKARSQQQLPQAHGAPGVTPGLMPAFGAAPGAPPTPGVPPMGPPVARPASNPYAPAPVQPPTTAPKKNFFEELPPIPVKPISRQPSYALSPPRAPFAQEASQQPRRVSDGYGMPSHGGPHSGVHSAPVSHHNSVSGPPAAAPHNPYAPPSGPSAVPPKTSSPYAHPPAAVPPKTSSPYAPPPPAVPPKSSSPYAPPPVSHSAPPAGGPPAGPPRGTSRGVPVPQPQPPVAAAAAAAAAAAAAAGTASGPPPAGPPRVSSRNAYAPPRGAPPRGTTPPVVAPAMAYSPNVSPKRVIQQPQTQSPRRYSEFKDIGQKSTVSDEALRKRQFPIFRWSNSKNATCLIAPQIGYATAVSQTSVRLLDVSKVVSTGEDITRFPGPLFTPNKGPVKSKKKELEKWVADHVNLLDSQNADADRVLLWKLVRVYLANDGVINSAQVRAFLTPHFEQSATGDGSAFTSAMDLSSSSFVPQQGDNGPSFSGSDANHVLRHLQSGSKDAAIRHCMDRRLWGHSMLIASTMGPEKWKDVVSEFIKDDVRPLYKPTLQFLYSSFGGVIPSSEAYGDWKETVSYLLSNAKDDGSDLSSLVSLGDDLVQKGYVAAGHFCYVVSRAPLTDKITLLGSEGRDLDAILLSETYEFALGLKTNVAIPQMQLYKLVHAEVLADLGNVAQAQRYAEYLNQALKSFTDKSSIIQPAYISRLIALSDRVSSTPGATTGSWFSRPKLDKVLGHLDKSLSKFVAGEEANVAGASSASDTVFSQIAATPGISRTTSVVDLSQQSAVTPGYQQHQPYGVPPTRASTGNILRPQGGSGPYDSRPSLPRSSSAMDAGPSGYGYERAPSVASVHSVQSDYPRVMSPIDVGGVSGGNSAYAPVGGAGIYPLPAGGSSAANAYAPGAGGNANAPPSGATANAYTPGATSSGPSPYALPSGNVYAPPSAPSASGASPYAPSASSFSPRQPAYGRSYASTPEHHIEEEEETEAVDQEQEPAADYSHLENENERYEQKSEPEPEPMAHPPPAQKAPPAAPPAQQAPAQKAGQKPPARKVAPPPKPSVKSVYNPYDPGSPAKEKKSSAAASNKYAPANSAYSPGNSSAPAPTANKEPEPATTSEAYGYGYGGGYGGYDPYSGYPAAEEEGAEPTETEVENEKAGEAEAAAADYPDYGVPSYGYQSQAADDAGDYGDDEGAIYTPAAVTLPPISNLPPVPLPGLEPATSAAPPASRYSAPTAAAEEEDDDDFGVGNKKPVAKKEEKKAEEKEEPKDGGKKGWFGGWFKKGEQQPADDKKVYKAKLGEKSNFYYSEEHKRWINGDLPIEDQIKGAGGPPPPPKAKKPAGPPAGGTPPPPSGGAPPVGASRGATPPVATPPAADTPPVPGAGGAPRPAATGAPRPKVVDPLEGFLTGGPPTGAPRKGARKSAKSRYVDIMNN</sequence>
<proteinExistence type="inferred from homology"/>
<dbReference type="EMBL" id="CR382128">
    <property type="protein sequence ID" value="CAG83061.1"/>
    <property type="molecule type" value="Genomic_DNA"/>
</dbReference>
<dbReference type="RefSeq" id="XP_500810.1">
    <property type="nucleotide sequence ID" value="XM_500810.1"/>
</dbReference>
<dbReference type="SMR" id="Q6CEV2"/>
<dbReference type="STRING" id="284591.Q6CEV2"/>
<dbReference type="EnsemblFungi" id="CAG83061">
    <property type="protein sequence ID" value="CAG83061"/>
    <property type="gene ID" value="YALI0_B12694g"/>
</dbReference>
<dbReference type="VEuPathDB" id="FungiDB:YALI0_B12694g"/>
<dbReference type="HOGENOM" id="CLU_231399_0_0_1"/>
<dbReference type="InParanoid" id="Q6CEV2"/>
<dbReference type="OMA" id="YKSPYDL"/>
<dbReference type="OrthoDB" id="67108at4891"/>
<dbReference type="Proteomes" id="UP000001300">
    <property type="component" value="Chromosome B"/>
</dbReference>
<dbReference type="GO" id="GO:0070971">
    <property type="term" value="C:endoplasmic reticulum exit site"/>
    <property type="evidence" value="ECO:0000318"/>
    <property type="project" value="GO_Central"/>
</dbReference>
<dbReference type="GO" id="GO:0005789">
    <property type="term" value="C:endoplasmic reticulum membrane"/>
    <property type="evidence" value="ECO:0007669"/>
    <property type="project" value="UniProtKB-SubCell"/>
</dbReference>
<dbReference type="GO" id="GO:0012507">
    <property type="term" value="C:ER to Golgi transport vesicle membrane"/>
    <property type="evidence" value="ECO:0000318"/>
    <property type="project" value="GO_Central"/>
</dbReference>
<dbReference type="GO" id="GO:0006914">
    <property type="term" value="P:autophagy"/>
    <property type="evidence" value="ECO:0007669"/>
    <property type="project" value="UniProtKB-KW"/>
</dbReference>
<dbReference type="GO" id="GO:0007030">
    <property type="term" value="P:Golgi organization"/>
    <property type="evidence" value="ECO:0000318"/>
    <property type="project" value="GO_Central"/>
</dbReference>
<dbReference type="GO" id="GO:0046907">
    <property type="term" value="P:intracellular transport"/>
    <property type="evidence" value="ECO:0007669"/>
    <property type="project" value="UniProtKB-ARBA"/>
</dbReference>
<dbReference type="GO" id="GO:0070973">
    <property type="term" value="P:protein localization to endoplasmic reticulum exit site"/>
    <property type="evidence" value="ECO:0000318"/>
    <property type="project" value="GO_Central"/>
</dbReference>
<dbReference type="GO" id="GO:0015031">
    <property type="term" value="P:protein transport"/>
    <property type="evidence" value="ECO:0007669"/>
    <property type="project" value="UniProtKB-KW"/>
</dbReference>
<dbReference type="GO" id="GO:0016192">
    <property type="term" value="P:vesicle-mediated transport"/>
    <property type="evidence" value="ECO:0007669"/>
    <property type="project" value="UniProtKB-KW"/>
</dbReference>
<dbReference type="CDD" id="cd09233">
    <property type="entry name" value="ACE1-Sec16-like"/>
    <property type="match status" value="1"/>
</dbReference>
<dbReference type="Gene3D" id="1.25.40.1030">
    <property type="match status" value="1"/>
</dbReference>
<dbReference type="Gene3D" id="6.20.50.30">
    <property type="match status" value="1"/>
</dbReference>
<dbReference type="InterPro" id="IPR024340">
    <property type="entry name" value="Sec16_CCD"/>
</dbReference>
<dbReference type="InterPro" id="IPR024298">
    <property type="entry name" value="Sec16_Sec23-bd"/>
</dbReference>
<dbReference type="PANTHER" id="PTHR13402">
    <property type="entry name" value="RGPR-RELATED"/>
    <property type="match status" value="1"/>
</dbReference>
<dbReference type="PANTHER" id="PTHR13402:SF6">
    <property type="entry name" value="SECRETORY 16, ISOFORM I"/>
    <property type="match status" value="1"/>
</dbReference>
<dbReference type="Pfam" id="PF12932">
    <property type="entry name" value="Sec16"/>
    <property type="match status" value="1"/>
</dbReference>
<dbReference type="Pfam" id="PF12931">
    <property type="entry name" value="TPR_Sec16"/>
    <property type="match status" value="1"/>
</dbReference>
<reference key="1">
    <citation type="journal article" date="2004" name="Nature">
        <title>Genome evolution in yeasts.</title>
        <authorList>
            <person name="Dujon B."/>
            <person name="Sherman D."/>
            <person name="Fischer G."/>
            <person name="Durrens P."/>
            <person name="Casaregola S."/>
            <person name="Lafontaine I."/>
            <person name="de Montigny J."/>
            <person name="Marck C."/>
            <person name="Neuveglise C."/>
            <person name="Talla E."/>
            <person name="Goffard N."/>
            <person name="Frangeul L."/>
            <person name="Aigle M."/>
            <person name="Anthouard V."/>
            <person name="Babour A."/>
            <person name="Barbe V."/>
            <person name="Barnay S."/>
            <person name="Blanchin S."/>
            <person name="Beckerich J.-M."/>
            <person name="Beyne E."/>
            <person name="Bleykasten C."/>
            <person name="Boisrame A."/>
            <person name="Boyer J."/>
            <person name="Cattolico L."/>
            <person name="Confanioleri F."/>
            <person name="de Daruvar A."/>
            <person name="Despons L."/>
            <person name="Fabre E."/>
            <person name="Fairhead C."/>
            <person name="Ferry-Dumazet H."/>
            <person name="Groppi A."/>
            <person name="Hantraye F."/>
            <person name="Hennequin C."/>
            <person name="Jauniaux N."/>
            <person name="Joyet P."/>
            <person name="Kachouri R."/>
            <person name="Kerrest A."/>
            <person name="Koszul R."/>
            <person name="Lemaire M."/>
            <person name="Lesur I."/>
            <person name="Ma L."/>
            <person name="Muller H."/>
            <person name="Nicaud J.-M."/>
            <person name="Nikolski M."/>
            <person name="Oztas S."/>
            <person name="Ozier-Kalogeropoulos O."/>
            <person name="Pellenz S."/>
            <person name="Potier S."/>
            <person name="Richard G.-F."/>
            <person name="Straub M.-L."/>
            <person name="Suleau A."/>
            <person name="Swennen D."/>
            <person name="Tekaia F."/>
            <person name="Wesolowski-Louvel M."/>
            <person name="Westhof E."/>
            <person name="Wirth B."/>
            <person name="Zeniou-Meyer M."/>
            <person name="Zivanovic Y."/>
            <person name="Bolotin-Fukuhara M."/>
            <person name="Thierry A."/>
            <person name="Bouchier C."/>
            <person name="Caudron B."/>
            <person name="Scarpelli C."/>
            <person name="Gaillardin C."/>
            <person name="Weissenbach J."/>
            <person name="Wincker P."/>
            <person name="Souciet J.-L."/>
        </authorList>
    </citation>
    <scope>NUCLEOTIDE SEQUENCE [LARGE SCALE GENOMIC DNA]</scope>
    <source>
        <strain>CLIB 122 / E 150</strain>
    </source>
</reference>